<dbReference type="EC" id="3.6.1.1" evidence="3 4"/>
<dbReference type="EMBL" id="AL123456">
    <property type="protein sequence ID" value="CCP46451.1"/>
    <property type="molecule type" value="Genomic_DNA"/>
</dbReference>
<dbReference type="PIR" id="E70561">
    <property type="entry name" value="E70561"/>
</dbReference>
<dbReference type="RefSeq" id="NP_218145.1">
    <property type="nucleotide sequence ID" value="NC_000962.3"/>
</dbReference>
<dbReference type="RefSeq" id="WP_003419577.1">
    <property type="nucleotide sequence ID" value="NZ_NVQJ01000045.1"/>
</dbReference>
<dbReference type="PDB" id="1SXV">
    <property type="method" value="X-ray"/>
    <property type="resolution" value="1.30 A"/>
    <property type="chains" value="A=1-162"/>
</dbReference>
<dbReference type="PDB" id="1WCF">
    <property type="method" value="X-ray"/>
    <property type="resolution" value="1.54 A"/>
    <property type="chains" value="A=1-162"/>
</dbReference>
<dbReference type="PDB" id="2UXS">
    <property type="method" value="X-ray"/>
    <property type="resolution" value="2.70 A"/>
    <property type="chains" value="A/B/C=2-162"/>
</dbReference>
<dbReference type="PDB" id="4Z70">
    <property type="method" value="X-ray"/>
    <property type="resolution" value="1.95 A"/>
    <property type="chains" value="A/B/C=1-162"/>
</dbReference>
<dbReference type="PDB" id="4Z71">
    <property type="method" value="X-ray"/>
    <property type="resolution" value="1.85 A"/>
    <property type="chains" value="A/B/C=1-162"/>
</dbReference>
<dbReference type="PDB" id="4Z72">
    <property type="method" value="X-ray"/>
    <property type="resolution" value="2.35 A"/>
    <property type="chains" value="A=1-162"/>
</dbReference>
<dbReference type="PDB" id="4Z73">
    <property type="method" value="X-ray"/>
    <property type="resolution" value="3.30 A"/>
    <property type="chains" value="A/B/C/D/E/F/G/H/I/J/K/L=1-162"/>
</dbReference>
<dbReference type="PDB" id="4Z74">
    <property type="method" value="X-ray"/>
    <property type="resolution" value="2.55 A"/>
    <property type="chains" value="A/B/C/D/E/F/G/H/I/J/K/L=1-162"/>
</dbReference>
<dbReference type="PDB" id="5KDE">
    <property type="method" value="X-ray"/>
    <property type="resolution" value="2.65 A"/>
    <property type="chains" value="A=1-162"/>
</dbReference>
<dbReference type="PDB" id="5KDF">
    <property type="method" value="X-ray"/>
    <property type="resolution" value="2.45 A"/>
    <property type="chains" value="A=1-162"/>
</dbReference>
<dbReference type="PDBsum" id="1SXV"/>
<dbReference type="PDBsum" id="1WCF"/>
<dbReference type="PDBsum" id="2UXS"/>
<dbReference type="PDBsum" id="4Z70"/>
<dbReference type="PDBsum" id="4Z71"/>
<dbReference type="PDBsum" id="4Z72"/>
<dbReference type="PDBsum" id="4Z73"/>
<dbReference type="PDBsum" id="4Z74"/>
<dbReference type="PDBsum" id="5KDE"/>
<dbReference type="PDBsum" id="5KDF"/>
<dbReference type="SMR" id="P9WI55"/>
<dbReference type="FunCoup" id="P9WI55">
    <property type="interactions" value="275"/>
</dbReference>
<dbReference type="STRING" id="83332.Rv3628"/>
<dbReference type="BindingDB" id="P9WI55"/>
<dbReference type="ChEMBL" id="CHEMBL3137292"/>
<dbReference type="PaxDb" id="83332-Rv3628"/>
<dbReference type="DNASU" id="885775"/>
<dbReference type="GeneID" id="885775"/>
<dbReference type="KEGG" id="mtu:Rv3628"/>
<dbReference type="KEGG" id="mtv:RVBD_3628"/>
<dbReference type="TubercuList" id="Rv3628"/>
<dbReference type="eggNOG" id="COG0221">
    <property type="taxonomic scope" value="Bacteria"/>
</dbReference>
<dbReference type="InParanoid" id="P9WI55"/>
<dbReference type="OrthoDB" id="5187599at2"/>
<dbReference type="PhylomeDB" id="P9WI55"/>
<dbReference type="BRENDA" id="3.6.1.1">
    <property type="organism ID" value="3445"/>
</dbReference>
<dbReference type="EvolutionaryTrace" id="P9WI55"/>
<dbReference type="Proteomes" id="UP000001584">
    <property type="component" value="Chromosome"/>
</dbReference>
<dbReference type="GO" id="GO:0005829">
    <property type="term" value="C:cytosol"/>
    <property type="evidence" value="ECO:0007005"/>
    <property type="project" value="MTBBASE"/>
</dbReference>
<dbReference type="GO" id="GO:0005576">
    <property type="term" value="C:extracellular region"/>
    <property type="evidence" value="ECO:0007669"/>
    <property type="project" value="UniProtKB-SubCell"/>
</dbReference>
<dbReference type="GO" id="GO:0044228">
    <property type="term" value="C:host cell surface"/>
    <property type="evidence" value="ECO:0007669"/>
    <property type="project" value="UniProtKB-SubCell"/>
</dbReference>
<dbReference type="GO" id="GO:0005886">
    <property type="term" value="C:plasma membrane"/>
    <property type="evidence" value="ECO:0007005"/>
    <property type="project" value="MTBBASE"/>
</dbReference>
<dbReference type="GO" id="GO:0004427">
    <property type="term" value="F:inorganic diphosphate phosphatase activity"/>
    <property type="evidence" value="ECO:0000314"/>
    <property type="project" value="MTBBASE"/>
</dbReference>
<dbReference type="GO" id="GO:0000287">
    <property type="term" value="F:magnesium ion binding"/>
    <property type="evidence" value="ECO:0000314"/>
    <property type="project" value="MTBBASE"/>
</dbReference>
<dbReference type="GO" id="GO:0006796">
    <property type="term" value="P:phosphate-containing compound metabolic process"/>
    <property type="evidence" value="ECO:0000314"/>
    <property type="project" value="MTBBASE"/>
</dbReference>
<dbReference type="CDD" id="cd00412">
    <property type="entry name" value="pyrophosphatase"/>
    <property type="match status" value="1"/>
</dbReference>
<dbReference type="FunFam" id="3.90.80.10:FF:000003">
    <property type="entry name" value="Inorganic pyrophosphatase"/>
    <property type="match status" value="1"/>
</dbReference>
<dbReference type="Gene3D" id="3.90.80.10">
    <property type="entry name" value="Inorganic pyrophosphatase"/>
    <property type="match status" value="1"/>
</dbReference>
<dbReference type="HAMAP" id="MF_00209">
    <property type="entry name" value="Inorganic_PPase"/>
    <property type="match status" value="1"/>
</dbReference>
<dbReference type="InterPro" id="IPR008162">
    <property type="entry name" value="Pyrophosphatase"/>
</dbReference>
<dbReference type="InterPro" id="IPR036649">
    <property type="entry name" value="Pyrophosphatase_sf"/>
</dbReference>
<dbReference type="PANTHER" id="PTHR10286">
    <property type="entry name" value="INORGANIC PYROPHOSPHATASE"/>
    <property type="match status" value="1"/>
</dbReference>
<dbReference type="Pfam" id="PF00719">
    <property type="entry name" value="Pyrophosphatase"/>
    <property type="match status" value="1"/>
</dbReference>
<dbReference type="SUPFAM" id="SSF50324">
    <property type="entry name" value="Inorganic pyrophosphatase"/>
    <property type="match status" value="1"/>
</dbReference>
<dbReference type="PROSITE" id="PS00387">
    <property type="entry name" value="PPASE"/>
    <property type="match status" value="1"/>
</dbReference>
<evidence type="ECO:0000255" key="1">
    <source>
        <dbReference type="HAMAP-Rule" id="MF_00209"/>
    </source>
</evidence>
<evidence type="ECO:0000269" key="2">
    <source>
    </source>
</evidence>
<evidence type="ECO:0000269" key="3">
    <source>
    </source>
</evidence>
<evidence type="ECO:0000269" key="4">
    <source>
    </source>
</evidence>
<evidence type="ECO:0000269" key="5">
    <source>
    </source>
</evidence>
<evidence type="ECO:0000303" key="6">
    <source>
    </source>
</evidence>
<evidence type="ECO:0000303" key="7">
    <source>
    </source>
</evidence>
<evidence type="ECO:0000305" key="8">
    <source>
    </source>
</evidence>
<evidence type="ECO:0000305" key="9">
    <source>
    </source>
</evidence>
<evidence type="ECO:0007829" key="10">
    <source>
        <dbReference type="PDB" id="1SXV"/>
    </source>
</evidence>
<keyword id="KW-0002">3D-structure</keyword>
<keyword id="KW-0963">Cytoplasm</keyword>
<keyword id="KW-0378">Hydrolase</keyword>
<keyword id="KW-0460">Magnesium</keyword>
<keyword id="KW-0479">Metal-binding</keyword>
<keyword id="KW-1185">Reference proteome</keyword>
<keyword id="KW-0964">Secreted</keyword>
<proteinExistence type="evidence at protein level"/>
<organism>
    <name type="scientific">Mycobacterium tuberculosis (strain ATCC 25618 / H37Rv)</name>
    <dbReference type="NCBI Taxonomy" id="83332"/>
    <lineage>
        <taxon>Bacteria</taxon>
        <taxon>Bacillati</taxon>
        <taxon>Actinomycetota</taxon>
        <taxon>Actinomycetes</taxon>
        <taxon>Mycobacteriales</taxon>
        <taxon>Mycobacteriaceae</taxon>
        <taxon>Mycobacterium</taxon>
        <taxon>Mycobacterium tuberculosis complex</taxon>
    </lineage>
</organism>
<gene>
    <name evidence="6" type="primary">ppa</name>
    <name type="ordered locus">Rv3628</name>
    <name type="ORF">MTCY15C10.24</name>
</gene>
<name>IPYR_MYCTU</name>
<sequence length="162" mass="18329">MQFDVTIEIPKGQRNKYEVDHETGRVRLDRYLYTPMAYPTDYGFIEDTLGDDGDPLDALVLLPQPVFPGVLVAARPVGMFRMVDEHGGDDKVLCVPAGDPRWDHVQDIGDVPAFELDAIKHFFVHYKDLEPGKFVKAADWVDRAEAEAEVQRSVERFKAGTH</sequence>
<protein>
    <recommendedName>
        <fullName evidence="7">Inorganic pyrophosphatase</fullName>
        <ecNumber evidence="3 4">3.6.1.1</ecNumber>
    </recommendedName>
    <alternativeName>
        <fullName evidence="1">Pyrophosphate phospho-hydrolase</fullName>
        <shortName evidence="7">PPase</shortName>
    </alternativeName>
</protein>
<reference key="1">
    <citation type="journal article" date="1998" name="Nature">
        <title>Deciphering the biology of Mycobacterium tuberculosis from the complete genome sequence.</title>
        <authorList>
            <person name="Cole S.T."/>
            <person name="Brosch R."/>
            <person name="Parkhill J."/>
            <person name="Garnier T."/>
            <person name="Churcher C.M."/>
            <person name="Harris D.E."/>
            <person name="Gordon S.V."/>
            <person name="Eiglmeier K."/>
            <person name="Gas S."/>
            <person name="Barry C.E. III"/>
            <person name="Tekaia F."/>
            <person name="Badcock K."/>
            <person name="Basham D."/>
            <person name="Brown D."/>
            <person name="Chillingworth T."/>
            <person name="Connor R."/>
            <person name="Davies R.M."/>
            <person name="Devlin K."/>
            <person name="Feltwell T."/>
            <person name="Gentles S."/>
            <person name="Hamlin N."/>
            <person name="Holroyd S."/>
            <person name="Hornsby T."/>
            <person name="Jagels K."/>
            <person name="Krogh A."/>
            <person name="McLean J."/>
            <person name="Moule S."/>
            <person name="Murphy L.D."/>
            <person name="Oliver S."/>
            <person name="Osborne J."/>
            <person name="Quail M.A."/>
            <person name="Rajandream M.A."/>
            <person name="Rogers J."/>
            <person name="Rutter S."/>
            <person name="Seeger K."/>
            <person name="Skelton S."/>
            <person name="Squares S."/>
            <person name="Squares R."/>
            <person name="Sulston J.E."/>
            <person name="Taylor K."/>
            <person name="Whitehead S."/>
            <person name="Barrell B.G."/>
        </authorList>
    </citation>
    <scope>NUCLEOTIDE SEQUENCE [LARGE SCALE GENOMIC DNA]</scope>
    <source>
        <strain>ATCC 25618 / H37Rv</strain>
    </source>
</reference>
<reference key="2">
    <citation type="journal article" date="2001" name="BMC Microbiol.">
        <title>Analysis of stress- and host cell-induced expression of the Mycobacterium tuberculosis inorganic pyrophosphatase.</title>
        <authorList>
            <person name="Triccas J.A."/>
            <person name="Gicquel B."/>
        </authorList>
    </citation>
    <scope>INDUCTION</scope>
</reference>
<reference key="3">
    <citation type="journal article" date="2011" name="Mol. Cell. Proteomics">
        <title>Proteogenomic analysis of Mycobacterium tuberculosis by high resolution mass spectrometry.</title>
        <authorList>
            <person name="Kelkar D.S."/>
            <person name="Kumar D."/>
            <person name="Kumar P."/>
            <person name="Balakrishnan L."/>
            <person name="Muthusamy B."/>
            <person name="Yadav A.K."/>
            <person name="Shrivastava P."/>
            <person name="Marimuthu A."/>
            <person name="Anand S."/>
            <person name="Sundaram H."/>
            <person name="Kingsbury R."/>
            <person name="Harsha H.C."/>
            <person name="Nair B."/>
            <person name="Prasad T.S."/>
            <person name="Chauhan D.S."/>
            <person name="Katoch K."/>
            <person name="Katoch V.M."/>
            <person name="Kumar P."/>
            <person name="Chaerkady R."/>
            <person name="Ramachandran S."/>
            <person name="Dash D."/>
            <person name="Pandey A."/>
        </authorList>
    </citation>
    <scope>IDENTIFICATION BY MASS SPECTROMETRY [LARGE SCALE ANALYSIS]</scope>
    <source>
        <strain>ATCC 25618 / H37Rv</strain>
    </source>
</reference>
<reference key="4">
    <citation type="journal article" date="2016" name="Oncotarget">
        <title>Mycobacterium tuberculosis Rv3628 drives Th1-type T cell immunity via TLR2-mediated activation of dendritic cells and displays vaccine potential against the hyper-virulent Beijing K strain.</title>
        <authorList>
            <person name="Kim W.S."/>
            <person name="Kim J.S."/>
            <person name="Cha S.B."/>
            <person name="Kim H."/>
            <person name="Kwon K.W."/>
            <person name="Kim S.J."/>
            <person name="Han S.J."/>
            <person name="Choi S.Y."/>
            <person name="Cho S.N."/>
            <person name="Park J.H."/>
            <person name="Shin S.J."/>
        </authorList>
    </citation>
    <scope>FUNCTION</scope>
    <scope>BIOTECHNOLOGY</scope>
    <scope>SUBCELLULAR LOCATION</scope>
    <source>
        <strain>ATCC 27294 / TMC 102 / H37Rv</strain>
    </source>
</reference>
<reference key="5">
    <citation type="journal article" date="2005" name="J. Biol. Chem.">
        <title>An unusual, His-dependent family I pyrophosphatase from Mycobacterium tuberculosis.</title>
        <authorList>
            <person name="Tammenkoski M."/>
            <person name="Benini S."/>
            <person name="Magretova N.N."/>
            <person name="Baykov A.A."/>
            <person name="Lahti R."/>
        </authorList>
    </citation>
    <scope>X-RAY CRYSTALLOGRAPHY (1.3 ANGSTROMS) IN COMPLEX WITH SULFATE</scope>
    <scope>FUNCTION</scope>
    <scope>CATALYTIC ACTIVITY</scope>
    <scope>COFACTOR</scope>
    <scope>BIOPHYSICOCHEMICAL PROPERTIES</scope>
    <scope>SUBUNIT</scope>
    <scope>MUTAGENESIS OF HIS-21 AND HIS-86</scope>
</reference>
<reference key="6">
    <citation type="journal article" date="2011" name="Acta Crystallogr. F">
        <title>Structure of the Mycobacterium tuberculosis soluble inorganic pyrophosphatase Rv3628 at pH 7.0.</title>
        <authorList>
            <person name="Benini S."/>
            <person name="Wilson K."/>
        </authorList>
    </citation>
    <scope>X-RAY CRYSTALLOGRAPHY (1.54 ANGSTROMS) IN COMPLEX WITH PHOSPHATE</scope>
</reference>
<reference key="7">
    <citation type="journal article" date="2015" name="J. Struct. Biol.">
        <title>Structural and computational dissection of the catalytic mechanism of the inorganic pyrophosphatase from Mycobacterium tuberculosis.</title>
        <authorList>
            <person name="Pratt A.C."/>
            <person name="Dewage S.W."/>
            <person name="Pang A.H."/>
            <person name="Biswas T."/>
            <person name="Barnard-Britson S."/>
            <person name="Cisneros G.A."/>
            <person name="Tsodikov O.V."/>
        </authorList>
    </citation>
    <scope>X-RAY CRYSTALLOGRAPHY (1.85 ANGSTROMS) IN COMPLEXES WITH DIVALENT METAL IONS; PYROPHOSPHATE AND PHOSPHATE IONS</scope>
    <scope>FUNCTION</scope>
    <scope>CATALYTIC ACTIVITY</scope>
    <scope>BIOPHYSICOCHEMICAL PROPERTIES</scope>
    <scope>SUBUNIT</scope>
    <scope>ACTIVE SITE</scope>
    <scope>MUTAGENESIS OF ASP-54; ASP-57 AND ASP-89</scope>
    <scope>REACTION MECHANISM</scope>
</reference>
<accession>P9WI55</accession>
<accession>L0TG18</accession>
<accession>O06379</accession>
<accession>P65746</accession>
<comment type="function">
    <text evidence="3 4">Catalyzes the hydrolysis of inorganic pyrophosphate (PPi) forming two phosphate ions.</text>
</comment>
<comment type="function">
    <text evidence="5">Antigen that activates dendritic cells (DCs), increasing their expression of cell surface molecules and augmenting their production of TNF-alpha, IL-1beta, IL-6, IL-23 and IL-12p70. Rv3628 mediates these effects by binding to TLR2 and activating downstream MyD88-, MAPK- and NF-kappaB-dependent signaling pathways. Rv3628-stimulated DCs induce the expansion of OVA-specific CD4+ and CD8+ T cells which secrete IFN-gamma and IL-2, and the generation of effector/memory T cells. Thus, Rv3628 polarizes DCs toward a Th1 immune response and promotes protective immunity against M.tuberculosis infection. Is not able to bind to TLR4 molecules on the cell surface.</text>
</comment>
<comment type="catalytic activity">
    <reaction evidence="3 4">
        <text>diphosphate + H2O = 2 phosphate + H(+)</text>
        <dbReference type="Rhea" id="RHEA:24576"/>
        <dbReference type="ChEBI" id="CHEBI:15377"/>
        <dbReference type="ChEBI" id="CHEBI:15378"/>
        <dbReference type="ChEBI" id="CHEBI:33019"/>
        <dbReference type="ChEBI" id="CHEBI:43474"/>
        <dbReference type="EC" id="3.6.1.1"/>
    </reaction>
</comment>
<comment type="cofactor">
    <cofactor evidence="3">
        <name>Mg(2+)</name>
        <dbReference type="ChEBI" id="CHEBI:18420"/>
    </cofactor>
    <text evidence="3 8">Other metal ions such as Mn(2+) and Zn(2+) can support activity, but at a much lower rate (PubMed:16239227). Three metal ions appear to be required for the activation of the enzyme and the substrate during the catalytic cycle (PubMed:26296329).</text>
</comment>
<comment type="biophysicochemical properties">
    <kinetics>
        <KM evidence="3">8.3 uM for diphosphate (at pH 7.2)</KM>
        <KM evidence="4">64 uM for diphosphate (at pH 7.5)</KM>
        <text evidence="3 4">kcat is 240 sec(-1) at pH 7.2 (PubMed:16239227). kcat is 48 sec(-1) at pH 7.5 (PubMed:26296329).</text>
    </kinetics>
    <phDependence>
        <text evidence="3">Optimum pH is around 7.5.</text>
    </phDependence>
</comment>
<comment type="subunit">
    <text evidence="3 4">Homohexamer.</text>
</comment>
<comment type="subcellular location">
    <subcellularLocation>
        <location evidence="1">Cytoplasm</location>
    </subcellularLocation>
    <subcellularLocation>
        <location evidence="9">Secreted</location>
    </subcellularLocation>
    <subcellularLocation>
        <location evidence="5">Host cell surface</location>
    </subcellularLocation>
</comment>
<comment type="induction">
    <text evidence="2">Is constitutively expressed and is not up-regulated upon macrophage infection or by exposure to environmental stress when grown in vitro.</text>
</comment>
<comment type="biotechnology">
    <text evidence="5">Displays vaccine potential against the hyper-virulent M.tuberculosis Beijing K strain. Protective efficacy is correlated with the generation of Rv3628-specific CD4+ T cells co-producing IFN-gamma, TNF-alpha and IL-2 and exhibiting an elevated IFN-gamma recall response.</text>
</comment>
<comment type="similarity">
    <text evidence="1">Belongs to the PPase family.</text>
</comment>
<feature type="chain" id="PRO_0000137512" description="Inorganic pyrophosphatase">
    <location>
        <begin position="1"/>
        <end position="162"/>
    </location>
</feature>
<feature type="active site" description="Proton acceptor" evidence="8">
    <location>
        <position position="89"/>
    </location>
</feature>
<feature type="binding site" evidence="8">
    <location>
        <position position="8"/>
    </location>
    <ligand>
        <name>Mg(2+)</name>
        <dbReference type="ChEBI" id="CHEBI:18420"/>
        <label>2</label>
    </ligand>
</feature>
<feature type="binding site" evidence="4">
    <location>
        <position position="16"/>
    </location>
    <ligand>
        <name>substrate</name>
    </ligand>
</feature>
<feature type="binding site" evidence="4">
    <location>
        <position position="30"/>
    </location>
    <ligand>
        <name>substrate</name>
    </ligand>
</feature>
<feature type="binding site" evidence="4">
    <location>
        <position position="42"/>
    </location>
    <ligand>
        <name>substrate</name>
    </ligand>
</feature>
<feature type="binding site" evidence="8">
    <location>
        <position position="52"/>
    </location>
    <ligand>
        <name>Mg(2+)</name>
        <dbReference type="ChEBI" id="CHEBI:18420"/>
        <label>1</label>
    </ligand>
</feature>
<feature type="binding site" evidence="8">
    <location>
        <position position="57"/>
    </location>
    <ligand>
        <name>Mg(2+)</name>
        <dbReference type="ChEBI" id="CHEBI:18420"/>
        <label>1</label>
    </ligand>
</feature>
<feature type="binding site" evidence="8">
    <location>
        <position position="57"/>
    </location>
    <ligand>
        <name>Mg(2+)</name>
        <dbReference type="ChEBI" id="CHEBI:18420"/>
        <label>2</label>
    </ligand>
</feature>
<feature type="binding site" evidence="8">
    <location>
        <position position="84"/>
    </location>
    <ligand>
        <name>Mg(2+)</name>
        <dbReference type="ChEBI" id="CHEBI:18420"/>
        <label>3</label>
    </ligand>
</feature>
<feature type="binding site" evidence="8">
    <location>
        <position position="89"/>
    </location>
    <ligand>
        <name>Mg(2+)</name>
        <dbReference type="ChEBI" id="CHEBI:18420"/>
        <label>1</label>
    </ligand>
</feature>
<feature type="binding site" evidence="8">
    <location>
        <position position="89"/>
    </location>
    <ligand>
        <name>Mg(2+)</name>
        <dbReference type="ChEBI" id="CHEBI:18420"/>
        <label>3</label>
    </ligand>
</feature>
<feature type="binding site" evidence="4">
    <location>
        <position position="126"/>
    </location>
    <ligand>
        <name>substrate</name>
    </ligand>
</feature>
<feature type="mutagenesis site" description="4-fold decrease in catalytic activity with Mg(2+) as cofactor. 3-fold increase in catalytic activity with Zn(2+) as cofactor. Shifts the pH for optimal activity to 8.5." evidence="3">
    <original>H</original>
    <variation>K</variation>
    <location>
        <position position="21"/>
    </location>
</feature>
<feature type="mutagenesis site" description="3-fold decrease in catalytic activity, and 2-fold decrease in substrate affinity." evidence="4">
    <original>D</original>
    <variation>N</variation>
    <location>
        <position position="54"/>
    </location>
</feature>
<feature type="mutagenesis site" description="Loss of catalytic activity." evidence="4">
    <original>D</original>
    <variation>N</variation>
    <location>
        <position position="57"/>
    </location>
</feature>
<feature type="mutagenesis site" description="Nearly no effect on catalytic activity with Mg(2+) as cofactor. 10-fold increase in catalytic activity with Zn(2+) as cofactor." evidence="3">
    <original>H</original>
    <variation>A</variation>
    <location>
        <position position="86"/>
    </location>
</feature>
<feature type="mutagenesis site" description="Loss of catalytic activity." evidence="4">
    <original>D</original>
    <variation>N</variation>
    <location>
        <position position="89"/>
    </location>
</feature>
<feature type="strand" evidence="10">
    <location>
        <begin position="3"/>
        <end position="9"/>
    </location>
</feature>
<feature type="strand" evidence="10">
    <location>
        <begin position="15"/>
        <end position="19"/>
    </location>
</feature>
<feature type="turn" evidence="10">
    <location>
        <begin position="21"/>
        <end position="23"/>
    </location>
</feature>
<feature type="strand" evidence="10">
    <location>
        <begin position="26"/>
        <end position="31"/>
    </location>
</feature>
<feature type="strand" evidence="10">
    <location>
        <begin position="33"/>
        <end position="35"/>
    </location>
</feature>
<feature type="strand" evidence="10">
    <location>
        <begin position="39"/>
        <end position="45"/>
    </location>
</feature>
<feature type="strand" evidence="10">
    <location>
        <begin position="57"/>
        <end position="60"/>
    </location>
</feature>
<feature type="strand" evidence="10">
    <location>
        <begin position="71"/>
        <end position="84"/>
    </location>
</feature>
<feature type="strand" evidence="10">
    <location>
        <begin position="91"/>
        <end position="96"/>
    </location>
</feature>
<feature type="helix" evidence="10">
    <location>
        <begin position="100"/>
        <end position="102"/>
    </location>
</feature>
<feature type="helix" evidence="10">
    <location>
        <begin position="108"/>
        <end position="110"/>
    </location>
</feature>
<feature type="helix" evidence="10">
    <location>
        <begin position="113"/>
        <end position="125"/>
    </location>
</feature>
<feature type="turn" evidence="10">
    <location>
        <begin position="126"/>
        <end position="129"/>
    </location>
</feature>
<feature type="strand" evidence="10">
    <location>
        <begin position="135"/>
        <end position="141"/>
    </location>
</feature>
<feature type="helix" evidence="10">
    <location>
        <begin position="143"/>
        <end position="158"/>
    </location>
</feature>